<proteinExistence type="inferred from homology"/>
<evidence type="ECO:0000255" key="1">
    <source>
        <dbReference type="HAMAP-Rule" id="MF_00501"/>
    </source>
</evidence>
<evidence type="ECO:0000305" key="2"/>
<accession>B0K7H0</accession>
<comment type="function">
    <text evidence="1">Binds the 23S rRNA.</text>
</comment>
<comment type="cofactor">
    <cofactor evidence="1">
        <name>Zn(2+)</name>
        <dbReference type="ChEBI" id="CHEBI:29105"/>
    </cofactor>
    <text evidence="1">Binds 1 zinc ion per subunit.</text>
</comment>
<comment type="subunit">
    <text evidence="1">Part of the 50S ribosomal subunit.</text>
</comment>
<comment type="similarity">
    <text evidence="1">Belongs to the bacterial ribosomal protein bL31 family. Type A subfamily.</text>
</comment>
<protein>
    <recommendedName>
        <fullName evidence="1">Large ribosomal subunit protein bL31</fullName>
    </recommendedName>
    <alternativeName>
        <fullName evidence="2">50S ribosomal protein L31</fullName>
    </alternativeName>
</protein>
<dbReference type="EMBL" id="CP000924">
    <property type="protein sequence ID" value="ABY95736.1"/>
    <property type="molecule type" value="Genomic_DNA"/>
</dbReference>
<dbReference type="RefSeq" id="WP_003867319.1">
    <property type="nucleotide sequence ID" value="NC_010321.1"/>
</dbReference>
<dbReference type="SMR" id="B0K7H0"/>
<dbReference type="STRING" id="340099.Teth39_2113"/>
<dbReference type="KEGG" id="tpd:Teth39_2113"/>
<dbReference type="eggNOG" id="COG0254">
    <property type="taxonomic scope" value="Bacteria"/>
</dbReference>
<dbReference type="HOGENOM" id="CLU_114306_4_3_9"/>
<dbReference type="Proteomes" id="UP000002156">
    <property type="component" value="Chromosome"/>
</dbReference>
<dbReference type="GO" id="GO:1990904">
    <property type="term" value="C:ribonucleoprotein complex"/>
    <property type="evidence" value="ECO:0007669"/>
    <property type="project" value="UniProtKB-KW"/>
</dbReference>
<dbReference type="GO" id="GO:0005840">
    <property type="term" value="C:ribosome"/>
    <property type="evidence" value="ECO:0007669"/>
    <property type="project" value="UniProtKB-KW"/>
</dbReference>
<dbReference type="GO" id="GO:0046872">
    <property type="term" value="F:metal ion binding"/>
    <property type="evidence" value="ECO:0007669"/>
    <property type="project" value="UniProtKB-KW"/>
</dbReference>
<dbReference type="GO" id="GO:0019843">
    <property type="term" value="F:rRNA binding"/>
    <property type="evidence" value="ECO:0007669"/>
    <property type="project" value="UniProtKB-KW"/>
</dbReference>
<dbReference type="GO" id="GO:0003735">
    <property type="term" value="F:structural constituent of ribosome"/>
    <property type="evidence" value="ECO:0007669"/>
    <property type="project" value="InterPro"/>
</dbReference>
<dbReference type="GO" id="GO:0006412">
    <property type="term" value="P:translation"/>
    <property type="evidence" value="ECO:0007669"/>
    <property type="project" value="UniProtKB-UniRule"/>
</dbReference>
<dbReference type="Gene3D" id="4.10.830.30">
    <property type="entry name" value="Ribosomal protein L31"/>
    <property type="match status" value="1"/>
</dbReference>
<dbReference type="HAMAP" id="MF_00501">
    <property type="entry name" value="Ribosomal_bL31_1"/>
    <property type="match status" value="1"/>
</dbReference>
<dbReference type="InterPro" id="IPR034704">
    <property type="entry name" value="Ribosomal_bL28/bL31-like_sf"/>
</dbReference>
<dbReference type="InterPro" id="IPR002150">
    <property type="entry name" value="Ribosomal_bL31"/>
</dbReference>
<dbReference type="InterPro" id="IPR027491">
    <property type="entry name" value="Ribosomal_bL31_A"/>
</dbReference>
<dbReference type="InterPro" id="IPR042105">
    <property type="entry name" value="Ribosomal_bL31_sf"/>
</dbReference>
<dbReference type="NCBIfam" id="TIGR00105">
    <property type="entry name" value="L31"/>
    <property type="match status" value="1"/>
</dbReference>
<dbReference type="NCBIfam" id="NF000612">
    <property type="entry name" value="PRK00019.1"/>
    <property type="match status" value="1"/>
</dbReference>
<dbReference type="NCBIfam" id="NF001809">
    <property type="entry name" value="PRK00528.1"/>
    <property type="match status" value="1"/>
</dbReference>
<dbReference type="PANTHER" id="PTHR33280">
    <property type="entry name" value="50S RIBOSOMAL PROTEIN L31, CHLOROPLASTIC"/>
    <property type="match status" value="1"/>
</dbReference>
<dbReference type="PANTHER" id="PTHR33280:SF1">
    <property type="entry name" value="LARGE RIBOSOMAL SUBUNIT PROTEIN BL31C"/>
    <property type="match status" value="1"/>
</dbReference>
<dbReference type="Pfam" id="PF01197">
    <property type="entry name" value="Ribosomal_L31"/>
    <property type="match status" value="1"/>
</dbReference>
<dbReference type="PRINTS" id="PR01249">
    <property type="entry name" value="RIBOSOMALL31"/>
</dbReference>
<dbReference type="SUPFAM" id="SSF143800">
    <property type="entry name" value="L28p-like"/>
    <property type="match status" value="1"/>
</dbReference>
<dbReference type="PROSITE" id="PS01143">
    <property type="entry name" value="RIBOSOMAL_L31"/>
    <property type="match status" value="1"/>
</dbReference>
<name>RL31_THEP3</name>
<keyword id="KW-0479">Metal-binding</keyword>
<keyword id="KW-1185">Reference proteome</keyword>
<keyword id="KW-0687">Ribonucleoprotein</keyword>
<keyword id="KW-0689">Ribosomal protein</keyword>
<keyword id="KW-0694">RNA-binding</keyword>
<keyword id="KW-0699">rRNA-binding</keyword>
<keyword id="KW-0862">Zinc</keyword>
<gene>
    <name evidence="1" type="primary">rpmE</name>
    <name type="ordered locus">Teth39_2113</name>
</gene>
<reference key="1">
    <citation type="submission" date="2008-01" db="EMBL/GenBank/DDBJ databases">
        <title>Complete sequence of Thermoanaerobacter pseudethanolicus 39E.</title>
        <authorList>
            <person name="Copeland A."/>
            <person name="Lucas S."/>
            <person name="Lapidus A."/>
            <person name="Barry K."/>
            <person name="Glavina del Rio T."/>
            <person name="Dalin E."/>
            <person name="Tice H."/>
            <person name="Pitluck S."/>
            <person name="Bruce D."/>
            <person name="Goodwin L."/>
            <person name="Saunders E."/>
            <person name="Brettin T."/>
            <person name="Detter J.C."/>
            <person name="Han C."/>
            <person name="Schmutz J."/>
            <person name="Larimer F."/>
            <person name="Land M."/>
            <person name="Hauser L."/>
            <person name="Kyrpides N."/>
            <person name="Lykidis A."/>
            <person name="Hemme C."/>
            <person name="Fields M.W."/>
            <person name="He Z."/>
            <person name="Zhou J."/>
            <person name="Richardson P."/>
        </authorList>
    </citation>
    <scope>NUCLEOTIDE SEQUENCE [LARGE SCALE GENOMIC DNA]</scope>
    <source>
        <strain>ATCC 33223 / DSM 2355 / 39E</strain>
    </source>
</reference>
<feature type="chain" id="PRO_1000126757" description="Large ribosomal subunit protein bL31">
    <location>
        <begin position="1"/>
        <end position="69"/>
    </location>
</feature>
<feature type="binding site" evidence="1">
    <location>
        <position position="17"/>
    </location>
    <ligand>
        <name>Zn(2+)</name>
        <dbReference type="ChEBI" id="CHEBI:29105"/>
    </ligand>
</feature>
<feature type="binding site" evidence="1">
    <location>
        <position position="19"/>
    </location>
    <ligand>
        <name>Zn(2+)</name>
        <dbReference type="ChEBI" id="CHEBI:29105"/>
    </ligand>
</feature>
<feature type="binding site" evidence="1">
    <location>
        <position position="37"/>
    </location>
    <ligand>
        <name>Zn(2+)</name>
        <dbReference type="ChEBI" id="CHEBI:29105"/>
    </ligand>
</feature>
<feature type="binding site" evidence="1">
    <location>
        <position position="40"/>
    </location>
    <ligand>
        <name>Zn(2+)</name>
        <dbReference type="ChEBI" id="CHEBI:29105"/>
    </ligand>
</feature>
<sequence length="69" mass="8018">MKPNIHPTYYHDAVVRCACGNTFITGSTKKEIRVEICSKCHPFFTGQQKIVDTGGRVERFRKRFNLEEK</sequence>
<organism>
    <name type="scientific">Thermoanaerobacter pseudethanolicus (strain ATCC 33223 / 39E)</name>
    <name type="common">Clostridium thermohydrosulfuricum</name>
    <dbReference type="NCBI Taxonomy" id="340099"/>
    <lineage>
        <taxon>Bacteria</taxon>
        <taxon>Bacillati</taxon>
        <taxon>Bacillota</taxon>
        <taxon>Clostridia</taxon>
        <taxon>Thermoanaerobacterales</taxon>
        <taxon>Thermoanaerobacteraceae</taxon>
        <taxon>Thermoanaerobacter</taxon>
    </lineage>
</organism>